<sequence length="57" mass="6797">MQLLYDLTKMNYSALYGEGRYLRIPAPIHYADKFVKALGKNWKIDEELLKHGFLYFI</sequence>
<dbReference type="EMBL" id="L77117">
    <property type="status" value="NOT_ANNOTATED_CDS"/>
    <property type="molecule type" value="Genomic_DNA"/>
</dbReference>
<dbReference type="SMR" id="P0CW38"/>
<dbReference type="InParanoid" id="P0CW38"/>
<dbReference type="Proteomes" id="UP000000805">
    <property type="component" value="Chromosome"/>
</dbReference>
<dbReference type="GO" id="GO:0003676">
    <property type="term" value="F:nucleic acid binding"/>
    <property type="evidence" value="ECO:0007669"/>
    <property type="project" value="InterPro"/>
</dbReference>
<dbReference type="Gene3D" id="3.30.420.10">
    <property type="entry name" value="Ribonuclease H-like superfamily/Ribonuclease H"/>
    <property type="match status" value="1"/>
</dbReference>
<dbReference type="InterPro" id="IPR003165">
    <property type="entry name" value="Piwi"/>
</dbReference>
<dbReference type="InterPro" id="IPR012337">
    <property type="entry name" value="RNaseH-like_sf"/>
</dbReference>
<dbReference type="InterPro" id="IPR036397">
    <property type="entry name" value="RNaseH_sf"/>
</dbReference>
<dbReference type="Pfam" id="PF02171">
    <property type="entry name" value="Piwi"/>
    <property type="match status" value="1"/>
</dbReference>
<dbReference type="SUPFAM" id="SSF53098">
    <property type="entry name" value="Ribonuclease H-like"/>
    <property type="match status" value="1"/>
</dbReference>
<name>VAPB4_METJA</name>
<proteinExistence type="predicted"/>
<evidence type="ECO:0000305" key="1"/>
<comment type="function">
    <text evidence="1">Possibly the antitoxin component of a type II toxin-antitoxin (TA) system. Its cognate toxin is VapC4 (Potential).</text>
</comment>
<organism>
    <name type="scientific">Methanocaldococcus jannaschii (strain ATCC 43067 / DSM 2661 / JAL-1 / JCM 10045 / NBRC 100440)</name>
    <name type="common">Methanococcus jannaschii</name>
    <dbReference type="NCBI Taxonomy" id="243232"/>
    <lineage>
        <taxon>Archaea</taxon>
        <taxon>Methanobacteriati</taxon>
        <taxon>Methanobacteriota</taxon>
        <taxon>Methanomada group</taxon>
        <taxon>Methanococci</taxon>
        <taxon>Methanococcales</taxon>
        <taxon>Methanocaldococcaceae</taxon>
        <taxon>Methanocaldococcus</taxon>
    </lineage>
</organism>
<reference key="1">
    <citation type="journal article" date="1996" name="Science">
        <title>Complete genome sequence of the methanogenic archaeon, Methanococcus jannaschii.</title>
        <authorList>
            <person name="Bult C.J."/>
            <person name="White O."/>
            <person name="Olsen G.J."/>
            <person name="Zhou L."/>
            <person name="Fleischmann R.D."/>
            <person name="Sutton G.G."/>
            <person name="Blake J.A."/>
            <person name="FitzGerald L.M."/>
            <person name="Clayton R.A."/>
            <person name="Gocayne J.D."/>
            <person name="Kerlavage A.R."/>
            <person name="Dougherty B.A."/>
            <person name="Tomb J.-F."/>
            <person name="Adams M.D."/>
            <person name="Reich C.I."/>
            <person name="Overbeek R."/>
            <person name="Kirkness E.F."/>
            <person name="Weinstock K.G."/>
            <person name="Merrick J.M."/>
            <person name="Glodek A."/>
            <person name="Scott J.L."/>
            <person name="Geoghagen N.S.M."/>
            <person name="Weidman J.F."/>
            <person name="Fuhrmann J.L."/>
            <person name="Nguyen D."/>
            <person name="Utterback T.R."/>
            <person name="Kelley J.M."/>
            <person name="Peterson J.D."/>
            <person name="Sadow P.W."/>
            <person name="Hanna M.C."/>
            <person name="Cotton M.D."/>
            <person name="Roberts K.M."/>
            <person name="Hurst M.A."/>
            <person name="Kaine B.P."/>
            <person name="Borodovsky M."/>
            <person name="Klenk H.-P."/>
            <person name="Fraser C.M."/>
            <person name="Smith H.O."/>
            <person name="Woese C.R."/>
            <person name="Venter J.C."/>
        </authorList>
    </citation>
    <scope>NUCLEOTIDE SEQUENCE [LARGE SCALE GENOMIC DNA]</scope>
    <source>
        <strain>ATCC 43067 / DSM 2661 / JAL-1 / JCM 10045 / NBRC 100440</strain>
    </source>
</reference>
<reference key="2">
    <citation type="journal article" date="2005" name="Nucleic Acids Res.">
        <title>Toxin-antitoxin loci are highly abundant in free-living but lost from host-associated prokaryotes.</title>
        <authorList>
            <person name="Pandey D.P."/>
            <person name="Gerdes K."/>
        </authorList>
    </citation>
    <scope>IDENTIFICATION</scope>
    <scope>POSSIBLE FUNCTION</scope>
    <source>
        <strain>ATCC 43067 / DSM 2661 / JAL-1 / JCM 10045 / NBRC 100440</strain>
    </source>
</reference>
<protein>
    <recommendedName>
        <fullName>Putative antitoxin VapB4</fullName>
    </recommendedName>
</protein>
<keyword id="KW-1185">Reference proteome</keyword>
<keyword id="KW-1277">Toxin-antitoxin system</keyword>
<feature type="chain" id="PRO_0000408088" description="Putative antitoxin VapB4">
    <location>
        <begin position="1"/>
        <end position="57"/>
    </location>
</feature>
<gene>
    <name type="primary">vapB4</name>
    <name type="ordered locus">MJ1319.1</name>
</gene>
<accession>P0CW38</accession>